<comment type="function">
    <molecule>Isoform VP2</molecule>
    <text evidence="1">Structural protein that resides within the core of the capsid surrounded by 72 VP1 pentamers. Participates in host cell receptor binding together with VP1. Following virus endocytosis and trafficking to the endoplasmic reticulum, VP2 and VP3 form oligomers and integrate into the endoplasmic reticulum membrane. Heterooligomer VP2-VP3 may create a viroporin for transporting the viral genome across the endoplasmic reticulum membrane to the cytoplasm. Nuclear entry of the viral DNA involves the selective exposure and importin recognition of VP2 or VP3 nuclear localization signal (shared C-terminus). Plays a role in virion assembly within the nucleus in particular through a DNA-binding domain located in the C-terminal region. A N-terminal myristoylation suggests a scaffold function for virion assembly.</text>
</comment>
<comment type="function">
    <molecule>Isoform VP3</molecule>
    <text evidence="1">Structural protein that resides within the core of the capsid surrounded by 72 VP1 pentamers. Following virus endocytosis and trafficking to the endoplasmic reticulum, VP2 and VP3 form oligomers and integrate into the endoplasmic reticulum membrane. Heterooligomer VP2-VP3 may create a viroporin for transporting the viral genome across the endoplasmic reticulum membrane to the cytoplasm. Nuclear entry of the viral DNA involves the selective exposure and importin recognition of VP2 or VP3 nuclear localization signal (shared C-terminus). Plays a role in virion assembly within the nucleus.</text>
</comment>
<comment type="subunit">
    <molecule>Isoform VP2</molecule>
    <text evidence="1">Forms homooligomers, and heterooligomers with VP3 in the endoplasmic reticulum membrane. Interacts (via D1 domain) with VP1.</text>
</comment>
<comment type="subunit">
    <molecule>Isoform VP3</molecule>
    <text>Interacts (via D1 domain) with VP1.</text>
</comment>
<comment type="subcellular location">
    <molecule>Isoform VP2</molecule>
    <subcellularLocation>
        <location evidence="1">Virion</location>
    </subcellularLocation>
    <subcellularLocation>
        <location evidence="1">Host endoplasmic reticulum</location>
    </subcellularLocation>
    <subcellularLocation>
        <location evidence="1">Host nucleus</location>
    </subcellularLocation>
    <subcellularLocation>
        <location evidence="1">Host endoplasmic reticulum membrane</location>
    </subcellularLocation>
    <text evidence="1">Following host cell entry, the virion enters into the endoplasmic reticulum through a calveolar-dependent pathway. Then, isoform VP2 integrates into the endoplasmic reticulum membrane and participates in the translocation of viral DNA to the nucleus. Shortly after synthesis, a nuclear localization signal directs isoform VP2 to the cell nucleus where virion assembly occurs.</text>
</comment>
<comment type="subcellular location">
    <molecule>Isoform VP3</molecule>
    <subcellularLocation>
        <location evidence="1">Virion</location>
    </subcellularLocation>
    <subcellularLocation>
        <location evidence="1">Host endoplasmic reticulum</location>
    </subcellularLocation>
    <subcellularLocation>
        <location evidence="1">Host nucleus</location>
    </subcellularLocation>
    <subcellularLocation>
        <location evidence="1">Host endoplasmic reticulum membrane</location>
    </subcellularLocation>
    <text evidence="1">Following host cell entry, the virion enters into the endoplasmic reticulum through a calveolar-dependent pathway. Then, isoform VP3 integrates into the endoplasmic reticulum membrane and participates in the translocation of viral DNA to the nucleus. Shortly after synthesis, a nuclear localization signal directs isoform VP3 to the cell nucleus where virion assembly occurs.</text>
</comment>
<comment type="alternative products">
    <event type="alternative splicing"/>
    <event type="alternative initiation"/>
    <isoform>
        <id>P0DOJ1-1</id>
        <id>A3R4N1-1</id>
        <name>VP2</name>
        <name>Minor capsid protein VP2</name>
        <sequence type="displayed"/>
    </isoform>
    <isoform>
        <id>P0DOJ1-2</id>
        <id>A3R4N1-2</id>
        <name>VP3</name>
        <name>Minor capsid protein VP3</name>
        <sequence type="described" ref="VSP_027106"/>
    </isoform>
    <isoform>
        <id>P0DOI2-1</id>
        <id>A3R4N3-1</id>
        <name>VP1</name>
        <sequence type="external"/>
    </isoform>
</comment>
<comment type="miscellaneous">
    <molecule>Isoform VP2</molecule>
    <text>Produced by alternative splicing of the late mRNA.</text>
</comment>
<comment type="miscellaneous">
    <molecule>Isoform VP3</molecule>
    <text evidence="3">Produced by alternative initiation at Met-144 of isoform VP2.</text>
</comment>
<comment type="similarity">
    <text evidence="3">Belongs to the polyomaviruses capsid protein VP2 family.</text>
</comment>
<sequence>MGIFLAVPEIIAASIAGGAEALSIAGSGAAIATGEGLAALGGITEGAALLGETIPISEAATTVLTKVPELVQATQAVTAAVQGGAGLVGGIYTALASDHPGDLPPNTPTGSASGLHPTSGYNPQGAGLNLQSVHKPIHAPYSGMALVPIPEYQLETGIPGIPDWLFNLVASYLPELPSLQDVFNRIAFGIWSSYYNAGSTVVNRVLSDEIQRLLRDLEYGFRATLASIGESDPVNAIATQVRSLASTARERELLQITAGQPLDLSRPTSALSAAAGALTEAAYNFIYDASSLPKDGFNALSEGVHRLGQWISFSGPTGGTPHYATPDWILYVLEQLNADTYKIPTQAVKRKQDELHPVSPTKKANKAKKSSSPGTNSGNRSKKRRGRSTSRSTTVRRNRI</sequence>
<reference key="1">
    <citation type="journal article" date="2007" name="J. Virol.">
        <title>Identification of a third human polyomavirus.</title>
        <authorList>
            <person name="Allander T."/>
            <person name="Andreasson K."/>
            <person name="Gupta S."/>
            <person name="Bjerkner A."/>
            <person name="Bogdanovic G."/>
            <person name="Persson M.A."/>
            <person name="Dalianis T."/>
            <person name="Ramqvist T."/>
            <person name="Andersson B."/>
        </authorList>
    </citation>
    <scope>NUCLEOTIDE SEQUENCE [GENOMIC DNA]</scope>
</reference>
<reference key="2">
    <citation type="journal article" date="2009" name="Virology">
        <title>The Polyomaviridae: Contributions of virus structure to our understanding of virus receptors and infectious entry.</title>
        <authorList>
            <person name="Neu U."/>
            <person name="Stehle T."/>
            <person name="Atwood W.J."/>
        </authorList>
    </citation>
    <scope>REVIEW</scope>
</reference>
<protein>
    <recommendedName>
        <fullName>Minor capsid protein VP2</fullName>
    </recommendedName>
    <alternativeName>
        <fullName>Minor structural protein VP2</fullName>
    </alternativeName>
</protein>
<evidence type="ECO:0000250" key="1">
    <source>
        <dbReference type="UniProtKB" id="P03093"/>
    </source>
</evidence>
<evidence type="ECO:0000256" key="2">
    <source>
        <dbReference type="SAM" id="MobiDB-lite"/>
    </source>
</evidence>
<evidence type="ECO:0000305" key="3"/>
<name>VP2_POVKI</name>
<proteinExistence type="inferred from homology"/>
<keyword id="KW-0024">Alternative initiation</keyword>
<keyword id="KW-0025">Alternative splicing</keyword>
<keyword id="KW-0167">Capsid protein</keyword>
<keyword id="KW-1038">Host endoplasmic reticulum</keyword>
<keyword id="KW-1043">Host membrane</keyword>
<keyword id="KW-1048">Host nucleus</keyword>
<keyword id="KW-0426">Late protein</keyword>
<keyword id="KW-0449">Lipoprotein</keyword>
<keyword id="KW-0472">Membrane</keyword>
<keyword id="KW-0519">Myristate</keyword>
<keyword id="KW-1163">Viral penetration into host nucleus</keyword>
<keyword id="KW-0946">Virion</keyword>
<keyword id="KW-1160">Virus entry into host cell</keyword>
<organism>
    <name type="scientific">KI polyomavirus (isolate Stockholm 350)</name>
    <name type="common">KIPyV</name>
    <dbReference type="NCBI Taxonomy" id="423447"/>
    <lineage>
        <taxon>Viruses</taxon>
        <taxon>Monodnaviria</taxon>
        <taxon>Shotokuvirae</taxon>
        <taxon>Cossaviricota</taxon>
        <taxon>Papovaviricetes</taxon>
        <taxon>Sepolyvirales</taxon>
        <taxon>Polyomaviridae</taxon>
        <taxon>Betapolyomavirus</taxon>
        <taxon>Betapolyomavirus tertihominis</taxon>
    </lineage>
</organism>
<dbReference type="EMBL" id="EF127907">
    <property type="protein sequence ID" value="ABN09923.1"/>
    <property type="molecule type" value="Genomic_DNA"/>
</dbReference>
<dbReference type="EMBL" id="EF127907">
    <property type="protein sequence ID" value="ABN09924.1"/>
    <property type="molecule type" value="Genomic_DNA"/>
</dbReference>
<dbReference type="Proteomes" id="UP000101503">
    <property type="component" value="Genome"/>
</dbReference>
<dbReference type="GO" id="GO:0043657">
    <property type="term" value="C:host cell"/>
    <property type="evidence" value="ECO:0007669"/>
    <property type="project" value="GOC"/>
</dbReference>
<dbReference type="GO" id="GO:0044167">
    <property type="term" value="C:host cell endoplasmic reticulum membrane"/>
    <property type="evidence" value="ECO:0007669"/>
    <property type="project" value="UniProtKB-SubCell"/>
</dbReference>
<dbReference type="GO" id="GO:0042025">
    <property type="term" value="C:host cell nucleus"/>
    <property type="evidence" value="ECO:0007669"/>
    <property type="project" value="UniProtKB-SubCell"/>
</dbReference>
<dbReference type="GO" id="GO:0016020">
    <property type="term" value="C:membrane"/>
    <property type="evidence" value="ECO:0007669"/>
    <property type="project" value="UniProtKB-KW"/>
</dbReference>
<dbReference type="GO" id="GO:0019028">
    <property type="term" value="C:viral capsid"/>
    <property type="evidence" value="ECO:0007669"/>
    <property type="project" value="UniProtKB-KW"/>
</dbReference>
<dbReference type="GO" id="GO:0046718">
    <property type="term" value="P:symbiont entry into host cell"/>
    <property type="evidence" value="ECO:0007669"/>
    <property type="project" value="UniProtKB-KW"/>
</dbReference>
<dbReference type="GO" id="GO:0075732">
    <property type="term" value="P:viral penetration into host nucleus"/>
    <property type="evidence" value="ECO:0007669"/>
    <property type="project" value="UniProtKB-KW"/>
</dbReference>
<organismHost>
    <name type="scientific">Homo sapiens</name>
    <name type="common">Human</name>
    <dbReference type="NCBI Taxonomy" id="9606"/>
</organismHost>
<feature type="initiator methionine" description="Removed; by host" evidence="1">
    <location>
        <position position="1"/>
    </location>
</feature>
<feature type="chain" id="PRO_0000295817" description="Minor capsid protein VP2">
    <location>
        <begin position="2"/>
        <end position="400"/>
    </location>
</feature>
<feature type="region of interest" description="Disordered" evidence="2">
    <location>
        <begin position="99"/>
        <end position="118"/>
    </location>
</feature>
<feature type="region of interest" description="D1" evidence="1">
    <location>
        <begin position="307"/>
        <end position="342"/>
    </location>
</feature>
<feature type="region of interest" description="DNA-binding" evidence="1">
    <location>
        <begin position="347"/>
        <end position="394"/>
    </location>
</feature>
<feature type="region of interest" description="Disordered" evidence="2">
    <location>
        <begin position="348"/>
        <end position="400"/>
    </location>
</feature>
<feature type="short sequence motif" description="Nuclear localization signal" evidence="1">
    <location>
        <begin position="359"/>
        <end position="369"/>
    </location>
</feature>
<feature type="compositionally biased region" description="Low complexity" evidence="2">
    <location>
        <begin position="370"/>
        <end position="379"/>
    </location>
</feature>
<feature type="compositionally biased region" description="Basic residues" evidence="2">
    <location>
        <begin position="380"/>
        <end position="400"/>
    </location>
</feature>
<feature type="lipid moiety-binding region" description="N-myristoyl glycine; by host" evidence="1">
    <location>
        <position position="2"/>
    </location>
</feature>
<feature type="splice variant" id="VSP_027106" description="In isoform VP3." evidence="3">
    <location>
        <begin position="1"/>
        <end position="143"/>
    </location>
</feature>
<accession>P0DOJ1</accession>
<accession>A3R4M6</accession>
<accession>A3R4M7</accession>
<accession>A3R4N1</accession>
<accession>A3R4N2</accession>
<accession>A3R4N6</accession>
<accession>A3R4N7</accession>